<gene>
    <name type="primary">pilA</name>
    <name type="ordered locus">MXAN_5783</name>
</gene>
<dbReference type="EMBL" id="L39904">
    <property type="protein sequence ID" value="AAB40882.1"/>
    <property type="molecule type" value="Genomic_DNA"/>
</dbReference>
<dbReference type="EMBL" id="CP000113">
    <property type="protein sequence ID" value="ABF90139.1"/>
    <property type="molecule type" value="Genomic_DNA"/>
</dbReference>
<dbReference type="PIR" id="S70530">
    <property type="entry name" value="S70530"/>
</dbReference>
<dbReference type="RefSeq" id="WP_011555734.1">
    <property type="nucleotide sequence ID" value="NC_008095.1"/>
</dbReference>
<dbReference type="PDB" id="8TJ2">
    <property type="method" value="EM"/>
    <property type="resolution" value="3.00 A"/>
    <property type="chains" value="A/C/D/E/F/G/H/I/J/K/L/M/N/O/P/Q/R/S=13-220"/>
</dbReference>
<dbReference type="PDBsum" id="8TJ2"/>
<dbReference type="EMDB" id="EMD-41298"/>
<dbReference type="SMR" id="Q59589"/>
<dbReference type="STRING" id="246197.MXAN_5783"/>
<dbReference type="EnsemblBacteria" id="ABF90139">
    <property type="protein sequence ID" value="ABF90139"/>
    <property type="gene ID" value="MXAN_5783"/>
</dbReference>
<dbReference type="GeneID" id="41363026"/>
<dbReference type="KEGG" id="mxa:MXAN_5783"/>
<dbReference type="eggNOG" id="COG4968">
    <property type="taxonomic scope" value="Bacteria"/>
</dbReference>
<dbReference type="HOGENOM" id="CLU_098626_0_0_7"/>
<dbReference type="OrthoDB" id="5508528at2"/>
<dbReference type="Proteomes" id="UP000002402">
    <property type="component" value="Chromosome"/>
</dbReference>
<dbReference type="GO" id="GO:0016020">
    <property type="term" value="C:membrane"/>
    <property type="evidence" value="ECO:0007669"/>
    <property type="project" value="UniProtKB-SubCell"/>
</dbReference>
<dbReference type="GO" id="GO:0009289">
    <property type="term" value="C:pilus"/>
    <property type="evidence" value="ECO:0007669"/>
    <property type="project" value="UniProtKB-SubCell"/>
</dbReference>
<dbReference type="Gene3D" id="3.30.700.10">
    <property type="entry name" value="Glycoprotein, Type 4 Pilin"/>
    <property type="match status" value="1"/>
</dbReference>
<dbReference type="InterPro" id="IPR012902">
    <property type="entry name" value="N_methyl_site"/>
</dbReference>
<dbReference type="InterPro" id="IPR045584">
    <property type="entry name" value="Pilin-like"/>
</dbReference>
<dbReference type="InterPro" id="IPR028188">
    <property type="entry name" value="Pilin_PilA"/>
</dbReference>
<dbReference type="InterPro" id="IPR050470">
    <property type="entry name" value="T4P/T2SS_Core"/>
</dbReference>
<dbReference type="InterPro" id="IPR053672">
    <property type="entry name" value="Type_IV_major_pilin"/>
</dbReference>
<dbReference type="NCBIfam" id="TIGR02532">
    <property type="entry name" value="IV_pilin_GFxxxE"/>
    <property type="match status" value="1"/>
</dbReference>
<dbReference type="NCBIfam" id="NF041775">
    <property type="entry name" value="typeIV_PilA_Myxo"/>
    <property type="match status" value="1"/>
</dbReference>
<dbReference type="PANTHER" id="PTHR30093">
    <property type="entry name" value="GENERAL SECRETION PATHWAY PROTEIN G"/>
    <property type="match status" value="1"/>
</dbReference>
<dbReference type="PANTHER" id="PTHR30093:SF44">
    <property type="entry name" value="TYPE II SECRETION SYSTEM CORE PROTEIN G"/>
    <property type="match status" value="1"/>
</dbReference>
<dbReference type="Pfam" id="PF07963">
    <property type="entry name" value="N_methyl"/>
    <property type="match status" value="1"/>
</dbReference>
<dbReference type="Pfam" id="PF14245">
    <property type="entry name" value="Pilin_PilA"/>
    <property type="match status" value="1"/>
</dbReference>
<dbReference type="SUPFAM" id="SSF54523">
    <property type="entry name" value="Pili subunits"/>
    <property type="match status" value="1"/>
</dbReference>
<dbReference type="PROSITE" id="PS00409">
    <property type="entry name" value="PROKAR_NTER_METHYL"/>
    <property type="match status" value="1"/>
</dbReference>
<organism>
    <name type="scientific">Myxococcus xanthus (strain DK1622)</name>
    <dbReference type="NCBI Taxonomy" id="246197"/>
    <lineage>
        <taxon>Bacteria</taxon>
        <taxon>Pseudomonadati</taxon>
        <taxon>Myxococcota</taxon>
        <taxon>Myxococcia</taxon>
        <taxon>Myxococcales</taxon>
        <taxon>Cystobacterineae</taxon>
        <taxon>Myxococcaceae</taxon>
        <taxon>Myxococcus</taxon>
    </lineage>
</organism>
<proteinExistence type="evidence at protein level"/>
<keyword id="KW-0002">3D-structure</keyword>
<keyword id="KW-0281">Fimbrium</keyword>
<keyword id="KW-0472">Membrane</keyword>
<keyword id="KW-0488">Methylation</keyword>
<keyword id="KW-1185">Reference proteome</keyword>
<keyword id="KW-0812">Transmembrane</keyword>
<keyword id="KW-1133">Transmembrane helix</keyword>
<evidence type="ECO:0000255" key="1"/>
<evidence type="ECO:0000255" key="2">
    <source>
        <dbReference type="PROSITE-ProRule" id="PRU01070"/>
    </source>
</evidence>
<evidence type="ECO:0000269" key="3">
    <source>
    </source>
</evidence>
<evidence type="ECO:0000269" key="4">
    <source>
    </source>
</evidence>
<evidence type="ECO:0000269" key="5">
    <source>
    </source>
</evidence>
<evidence type="ECO:0000269" key="6">
    <source>
    </source>
</evidence>
<evidence type="ECO:0000269" key="7">
    <source>
    </source>
</evidence>
<evidence type="ECO:0000269" key="8">
    <source>
    </source>
</evidence>
<evidence type="ECO:0000269" key="9">
    <source>
    </source>
</evidence>
<evidence type="ECO:0000305" key="10"/>
<evidence type="ECO:0007829" key="11">
    <source>
        <dbReference type="PDB" id="8TJ2"/>
    </source>
</evidence>
<feature type="propeptide" id="PRO_0000246780" description="Leader sequence" evidence="2">
    <location>
        <begin position="1"/>
        <end position="12"/>
    </location>
</feature>
<feature type="chain" id="PRO_0000246781" description="Type IV major pilin protein PilA">
    <location>
        <begin position="13"/>
        <end position="220"/>
    </location>
</feature>
<feature type="transmembrane region" description="Helical" evidence="1">
    <location>
        <begin position="13"/>
        <end position="33"/>
    </location>
</feature>
<feature type="modified residue" description="N-methylphenylalanine" evidence="2">
    <location>
        <position position="13"/>
    </location>
</feature>
<feature type="mutagenesis site" description="Deficient in S motility despite its ability to produce surface pili." evidence="5">
    <original>A</original>
    <variation>L</variation>
    <location>
        <position position="32"/>
    </location>
</feature>
<feature type="mutagenesis site" description="Complete loss of detectable cell-surface PilA; when associated with N-104." evidence="4">
    <original>A</original>
    <variation>V</variation>
    <location>
        <position position="32"/>
    </location>
</feature>
<feature type="mutagenesis site" description="Pilus-minus S phenotype." evidence="8">
    <original>K</original>
    <variation>E</variation>
    <location>
        <position position="49"/>
    </location>
</feature>
<feature type="mutagenesis site" description="Complete loss of detectable cell-surface PilA; when associated with V-32." evidence="4">
    <original>D</original>
    <variation>N</variation>
    <location>
        <position position="104"/>
    </location>
</feature>
<feature type="mutagenesis site" description="Pilus-minus S phenotype." evidence="8">
    <original>G</original>
    <variation>D</variation>
    <location>
        <position position="193"/>
    </location>
</feature>
<feature type="helix" evidence="11">
    <location>
        <begin position="15"/>
        <end position="29"/>
    </location>
</feature>
<feature type="helix" evidence="11">
    <location>
        <begin position="37"/>
        <end position="44"/>
    </location>
</feature>
<feature type="helix" evidence="11">
    <location>
        <begin position="46"/>
        <end position="66"/>
    </location>
</feature>
<feature type="helix" evidence="11">
    <location>
        <begin position="73"/>
        <end position="76"/>
    </location>
</feature>
<feature type="strand" evidence="11">
    <location>
        <begin position="86"/>
        <end position="90"/>
    </location>
</feature>
<feature type="strand" evidence="11">
    <location>
        <begin position="92"/>
        <end position="95"/>
    </location>
</feature>
<feature type="strand" evidence="11">
    <location>
        <begin position="102"/>
        <end position="104"/>
    </location>
</feature>
<feature type="strand" evidence="11">
    <location>
        <begin position="113"/>
        <end position="115"/>
    </location>
</feature>
<feature type="turn" evidence="11">
    <location>
        <begin position="119"/>
        <end position="122"/>
    </location>
</feature>
<feature type="helix" evidence="11">
    <location>
        <begin position="124"/>
        <end position="126"/>
    </location>
</feature>
<feature type="strand" evidence="11">
    <location>
        <begin position="138"/>
        <end position="140"/>
    </location>
</feature>
<feature type="strand" evidence="11">
    <location>
        <begin position="150"/>
        <end position="154"/>
    </location>
</feature>
<feature type="strand" evidence="11">
    <location>
        <begin position="165"/>
        <end position="170"/>
    </location>
</feature>
<feature type="strand" evidence="11">
    <location>
        <begin position="179"/>
        <end position="186"/>
    </location>
</feature>
<feature type="strand" evidence="11">
    <location>
        <begin position="188"/>
        <end position="190"/>
    </location>
</feature>
<feature type="strand" evidence="11">
    <location>
        <begin position="199"/>
        <end position="201"/>
    </location>
</feature>
<feature type="strand" evidence="11">
    <location>
        <begin position="207"/>
        <end position="210"/>
    </location>
</feature>
<feature type="strand" evidence="11">
    <location>
        <begin position="212"/>
        <end position="214"/>
    </location>
</feature>
<protein>
    <recommendedName>
        <fullName>Type IV major pilin protein PilA</fullName>
    </recommendedName>
    <alternativeName>
        <fullName>Pilin</fullName>
    </alternativeName>
</protein>
<comment type="function">
    <text evidence="4 5 8 9">Major component of the type IV pili that are required for social gliding motility through cycles of extension and retraction. Extended pili are composed of thousands of copies of PilA and retract upon binding to extracellular polysaccharides and thereby pull the cell forward.</text>
</comment>
<comment type="activity regulation">
    <text evidence="7">The two-component PilS2/PilR2 is required for proper assembly of T4P and regulation.</text>
</comment>
<comment type="subcellular location">
    <subcellularLocation>
        <location>Fimbrium</location>
    </subcellularLocation>
    <subcellularLocation>
        <location evidence="4">Membrane</location>
        <topology evidence="1">Single-pass membrane protein</topology>
    </subcellularLocation>
</comment>
<comment type="induction">
    <text evidence="3 6 9">By the two-component system PilR/PilS component PilR (PubMed:9401034). In the contrary, PilS is a negative regulator of pilA expression. In addition, an increased level of c-di-GMP correlates with reduced transcription of the pilA gene (PubMed:26124238). Expression of pilA seems to be negatively regulated by the accumulation of pilin at a cell end (PubMed:15743959, PubMed:9401034).</text>
</comment>
<comment type="disruption phenotype">
    <text evidence="5">Deletion mutants show loss of observable pili.</text>
</comment>
<comment type="miscellaneous">
    <text>Pilin assembly limits pilus production and S motility. This limitation could be linked to the high frequency of reversal of gliding direction observed in M.xanthus. Reversal implies loss of pili at the leading pole of the cell and commissioning of new pili assembly at the other pole.</text>
</comment>
<comment type="similarity">
    <text evidence="10">Belongs to the N-Me-Phe pilin family.</text>
</comment>
<reference key="1">
    <citation type="journal article" date="1995" name="Mol. Microbiol.">
        <title>Genetic and functional evidence that type IV pili are required for social gliding motility in Myxococcus xanthus.</title>
        <authorList>
            <person name="Wu S.S."/>
            <person name="Kaiser D."/>
        </authorList>
    </citation>
    <scope>NUCLEOTIDE SEQUENCE [GENOMIC DNA]</scope>
    <scope>FUNCTION</scope>
    <scope>MUTAGENESIS OF LYS-49 AND GLY-193</scope>
</reference>
<reference key="2">
    <citation type="journal article" date="2006" name="Proc. Natl. Acad. Sci. U.S.A.">
        <title>Evolution of sensory complexity recorded in a myxobacterial genome.</title>
        <authorList>
            <person name="Goldman B.S."/>
            <person name="Nierman W.C."/>
            <person name="Kaiser D."/>
            <person name="Slater S.C."/>
            <person name="Durkin A.S."/>
            <person name="Eisen J.A."/>
            <person name="Ronning C.M."/>
            <person name="Barbazuk W.B."/>
            <person name="Blanchard M."/>
            <person name="Field C."/>
            <person name="Halling C."/>
            <person name="Hinkle G."/>
            <person name="Iartchuk O."/>
            <person name="Kim H.S."/>
            <person name="Mackenzie C."/>
            <person name="Madupu R."/>
            <person name="Miller N."/>
            <person name="Shvartsbeyn A."/>
            <person name="Sullivan S.A."/>
            <person name="Vaudin M."/>
            <person name="Wiegand R."/>
            <person name="Kaplan H.B."/>
        </authorList>
    </citation>
    <scope>NUCLEOTIDE SEQUENCE [LARGE SCALE GENOMIC DNA]</scope>
    <source>
        <strain>DK1622</strain>
    </source>
</reference>
<reference key="3">
    <citation type="journal article" date="1997" name="J. Bacteriol.">
        <title>Regulation of expression of the pilA gene in Myxococcus xanthus.</title>
        <authorList>
            <person name="Wu S.S."/>
            <person name="Kaiser D."/>
        </authorList>
    </citation>
    <scope>FUNCTION</scope>
    <scope>INDUCTION</scope>
    <source>
        <strain>DK1622</strain>
    </source>
</reference>
<reference key="4">
    <citation type="journal article" date="2005" name="J. Bacteriol.">
        <title>Regulating pilin expression reveals a threshold for S motility in Myxococcus xanthus.</title>
        <authorList>
            <person name="Jelsbak L."/>
            <person name="Kaiser D."/>
        </authorList>
    </citation>
    <scope>EXPRESSION</scope>
    <scope>INDUCTION</scope>
</reference>
<reference key="5">
    <citation type="journal article" date="2010" name="Mol. Microbiol.">
        <title>PilA localization affects extracellular polysaccharide production and fruiting body formation in Myxococcus xanthus.</title>
        <authorList>
            <person name="Yang Z."/>
            <person name="Lux R."/>
            <person name="Hu W."/>
            <person name="Hu C."/>
            <person name="Shi W."/>
        </authorList>
    </citation>
    <scope>FUNCTION</scope>
    <scope>MUTAGENESIS OF ALA-32 AND ASP-104</scope>
    <scope>SUBCELLULAR LOCATION</scope>
</reference>
<reference key="6">
    <citation type="journal article" date="2011" name="Microbiology">
        <title>Alanine 32 in PilA is important for PilA stability and type IV pili function in Myxococcus xanthus.</title>
        <authorList>
            <person name="Yang Z."/>
            <person name="Hu W."/>
            <person name="Chen K."/>
            <person name="Wang J."/>
            <person name="Lux R."/>
            <person name="Zhou Z.H."/>
            <person name="Shi W."/>
        </authorList>
    </citation>
    <scope>FUNCTION</scope>
    <scope>MUTAGENESIS OF ALA-32</scope>
    <scope>DISRUPTION PHENOTYPE</scope>
    <source>
        <strain>DK1622</strain>
    </source>
</reference>
<reference key="7">
    <citation type="journal article" date="2016" name="Mol. Microbiol.">
        <title>Type IV-pili dependent motility is co-regulated by PilSR and PilS2R2 two-component systems via distinct pathways in Myxococcus xanthus.</title>
        <authorList>
            <person name="Bretl D.J."/>
            <person name="Mueller S."/>
            <person name="Ladd K.M."/>
            <person name="Atkinson S.N."/>
            <person name="Kirby J.R."/>
        </authorList>
    </citation>
    <scope>ACTIVITY REGULATION</scope>
</reference>
<reference key="8">
    <citation type="journal article" date="2016" name="J. Bacteriol.">
        <title>Cyclic Di-GMP Regulates Type IV Pilus-Dependent Motility in Myxococcus xanthus.</title>
        <authorList>
            <person name="Skotnicka D."/>
            <person name="Petters T."/>
            <person name="Heering J."/>
            <person name="Hoppert M."/>
            <person name="Kaever V."/>
            <person name="Soegaard-Andersen L."/>
        </authorList>
    </citation>
    <scope>INDUCTION</scope>
</reference>
<accession>Q59589</accession>
<accession>Q1D0A3</accession>
<name>PILA_MYXXD</name>
<sequence>MRVSRFNPRNRGFTLIELMIVVAIIGILAAIAIPNFIKFQARSKQSEAKTNLKALYTAQKSFFSEKDRYSDFANEIGFAPERGNRYGYRVSAAAGDCEVRNAADLPVPAAGVPCISNDSFRFGANSAIDDPTPVVARFVPQGAAGWNTTLGVQPTIADCPNCNFFAGARGNADNEATFDDWVIAGFEGSGQVGPCSEAGNVASGTPYNTRNDVACDGAAQ</sequence>